<sequence>MTEYILLIISTALINNFVLVKFLGLCPFMGVSKKIETAIGMSLATMFVLTVASISAYLIDTYILTPLSATFLRTLVFILVIAVVVQFTEMVINKTSPTLYRLLGIFLPLITTNCAVLGVALLNINQAHTLTQSVIYGFGASLGFGLVLVLFAALRERLAAADVPHVFKGASIALITAGLMSLAFMGFTGLVR</sequence>
<comment type="function">
    <text evidence="1">Part of a membrane-bound complex that couples electron transfer with translocation of ions across the membrane.</text>
</comment>
<comment type="subunit">
    <text evidence="1">The complex is composed of six subunits: RnfA, RnfB, RnfC, RnfD, RnfE and RnfG.</text>
</comment>
<comment type="subcellular location">
    <subcellularLocation>
        <location evidence="1">Cell inner membrane</location>
        <topology evidence="1">Multi-pass membrane protein</topology>
    </subcellularLocation>
</comment>
<comment type="similarity">
    <text evidence="1">Belongs to the NqrDE/RnfAE family.</text>
</comment>
<keyword id="KW-0997">Cell inner membrane</keyword>
<keyword id="KW-1003">Cell membrane</keyword>
<keyword id="KW-0249">Electron transport</keyword>
<keyword id="KW-0472">Membrane</keyword>
<keyword id="KW-1185">Reference proteome</keyword>
<keyword id="KW-1278">Translocase</keyword>
<keyword id="KW-0812">Transmembrane</keyword>
<keyword id="KW-1133">Transmembrane helix</keyword>
<keyword id="KW-0813">Transport</keyword>
<dbReference type="EC" id="7.-.-.-" evidence="1"/>
<dbReference type="EMBL" id="AE004439">
    <property type="protein sequence ID" value="AAK02471.1"/>
    <property type="molecule type" value="Genomic_DNA"/>
</dbReference>
<dbReference type="SMR" id="Q9CNP0"/>
<dbReference type="STRING" id="272843.PM0387"/>
<dbReference type="EnsemblBacteria" id="AAK02471">
    <property type="protein sequence ID" value="AAK02471"/>
    <property type="gene ID" value="PM0387"/>
</dbReference>
<dbReference type="KEGG" id="pmu:PM0387"/>
<dbReference type="HOGENOM" id="CLU_095255_1_0_6"/>
<dbReference type="OrthoDB" id="9803631at2"/>
<dbReference type="Proteomes" id="UP000000809">
    <property type="component" value="Chromosome"/>
</dbReference>
<dbReference type="GO" id="GO:0005886">
    <property type="term" value="C:plasma membrane"/>
    <property type="evidence" value="ECO:0007669"/>
    <property type="project" value="UniProtKB-SubCell"/>
</dbReference>
<dbReference type="GO" id="GO:0022900">
    <property type="term" value="P:electron transport chain"/>
    <property type="evidence" value="ECO:0007669"/>
    <property type="project" value="UniProtKB-UniRule"/>
</dbReference>
<dbReference type="HAMAP" id="MF_00459">
    <property type="entry name" value="RsxA_RnfA"/>
    <property type="match status" value="1"/>
</dbReference>
<dbReference type="InterPro" id="IPR011293">
    <property type="entry name" value="Ion_transpt_RnfA/RsxA"/>
</dbReference>
<dbReference type="InterPro" id="IPR003667">
    <property type="entry name" value="NqrDE/RnfAE"/>
</dbReference>
<dbReference type="InterPro" id="IPR050133">
    <property type="entry name" value="NqrDE/RnfAE_oxidrdctase"/>
</dbReference>
<dbReference type="NCBIfam" id="NF003481">
    <property type="entry name" value="PRK05151.1"/>
    <property type="match status" value="1"/>
</dbReference>
<dbReference type="NCBIfam" id="TIGR01943">
    <property type="entry name" value="rnfA"/>
    <property type="match status" value="1"/>
</dbReference>
<dbReference type="PANTHER" id="PTHR30335">
    <property type="entry name" value="INTEGRAL MEMBRANE PROTEIN OF SOXR-REDUCING COMPLEX"/>
    <property type="match status" value="1"/>
</dbReference>
<dbReference type="PANTHER" id="PTHR30335:SF0">
    <property type="entry name" value="ION-TRANSLOCATING OXIDOREDUCTASE COMPLEX SUBUNIT A"/>
    <property type="match status" value="1"/>
</dbReference>
<dbReference type="Pfam" id="PF02508">
    <property type="entry name" value="Rnf-Nqr"/>
    <property type="match status" value="1"/>
</dbReference>
<dbReference type="PIRSF" id="PIRSF006102">
    <property type="entry name" value="NQR_DE"/>
    <property type="match status" value="1"/>
</dbReference>
<organism>
    <name type="scientific">Pasteurella multocida (strain Pm70)</name>
    <dbReference type="NCBI Taxonomy" id="272843"/>
    <lineage>
        <taxon>Bacteria</taxon>
        <taxon>Pseudomonadati</taxon>
        <taxon>Pseudomonadota</taxon>
        <taxon>Gammaproteobacteria</taxon>
        <taxon>Pasteurellales</taxon>
        <taxon>Pasteurellaceae</taxon>
        <taxon>Pasteurella</taxon>
    </lineage>
</organism>
<gene>
    <name evidence="1" type="primary">rnfA</name>
    <name type="ordered locus">PM0387</name>
</gene>
<feature type="chain" id="PRO_0000214294" description="Ion-translocating oxidoreductase complex subunit A">
    <location>
        <begin position="1"/>
        <end position="192"/>
    </location>
</feature>
<feature type="transmembrane region" description="Helical" evidence="1">
    <location>
        <begin position="5"/>
        <end position="25"/>
    </location>
</feature>
<feature type="transmembrane region" description="Helical" evidence="1">
    <location>
        <begin position="39"/>
        <end position="59"/>
    </location>
</feature>
<feature type="transmembrane region" description="Helical" evidence="1">
    <location>
        <begin position="63"/>
        <end position="83"/>
    </location>
</feature>
<feature type="transmembrane region" description="Helical" evidence="1">
    <location>
        <begin position="102"/>
        <end position="122"/>
    </location>
</feature>
<feature type="transmembrane region" description="Helical" evidence="1">
    <location>
        <begin position="134"/>
        <end position="154"/>
    </location>
</feature>
<feature type="transmembrane region" description="Helical" evidence="1">
    <location>
        <begin position="171"/>
        <end position="191"/>
    </location>
</feature>
<accession>Q9CNP0</accession>
<reference key="1">
    <citation type="journal article" date="2001" name="Proc. Natl. Acad. Sci. U.S.A.">
        <title>Complete genomic sequence of Pasteurella multocida Pm70.</title>
        <authorList>
            <person name="May B.J."/>
            <person name="Zhang Q."/>
            <person name="Li L.L."/>
            <person name="Paustian M.L."/>
            <person name="Whittam T.S."/>
            <person name="Kapur V."/>
        </authorList>
    </citation>
    <scope>NUCLEOTIDE SEQUENCE [LARGE SCALE GENOMIC DNA]</scope>
    <source>
        <strain>Pm70</strain>
    </source>
</reference>
<evidence type="ECO:0000255" key="1">
    <source>
        <dbReference type="HAMAP-Rule" id="MF_00459"/>
    </source>
</evidence>
<protein>
    <recommendedName>
        <fullName evidence="1">Ion-translocating oxidoreductase complex subunit A</fullName>
        <ecNumber evidence="1">7.-.-.-</ecNumber>
    </recommendedName>
    <alternativeName>
        <fullName evidence="1">Rnf electron transport complex subunit A</fullName>
    </alternativeName>
</protein>
<name>RNFA_PASMU</name>
<proteinExistence type="inferred from homology"/>